<keyword id="KW-0342">GTP-binding</keyword>
<keyword id="KW-0378">Hydrolase</keyword>
<keyword id="KW-0472">Membrane</keyword>
<keyword id="KW-0496">Mitochondrion</keyword>
<keyword id="KW-0999">Mitochondrion inner membrane</keyword>
<keyword id="KW-0547">Nucleotide-binding</keyword>
<keyword id="KW-0648">Protein biosynthesis</keyword>
<keyword id="KW-1185">Reference proteome</keyword>
<keyword id="KW-0809">Transit peptide</keyword>
<feature type="transit peptide" description="Mitochondrion" evidence="1">
    <location>
        <begin position="1"/>
        <end position="43"/>
    </location>
</feature>
<feature type="chain" id="PRO_0000402872" description="Translation factor guf1, mitochondrial">
    <location>
        <begin position="44"/>
        <end position="664"/>
    </location>
</feature>
<feature type="domain" description="tr-type G">
    <location>
        <begin position="66"/>
        <end position="246"/>
    </location>
</feature>
<feature type="binding site" evidence="1">
    <location>
        <begin position="75"/>
        <end position="82"/>
    </location>
    <ligand>
        <name>GTP</name>
        <dbReference type="ChEBI" id="CHEBI:37565"/>
    </ligand>
</feature>
<feature type="binding site" evidence="1">
    <location>
        <begin position="139"/>
        <end position="143"/>
    </location>
    <ligand>
        <name>GTP</name>
        <dbReference type="ChEBI" id="CHEBI:37565"/>
    </ligand>
</feature>
<feature type="binding site" evidence="1">
    <location>
        <begin position="193"/>
        <end position="196"/>
    </location>
    <ligand>
        <name>GTP</name>
        <dbReference type="ChEBI" id="CHEBI:37565"/>
    </ligand>
</feature>
<dbReference type="EC" id="3.6.5.-"/>
<dbReference type="EMBL" id="DS027056">
    <property type="protein sequence ID" value="EAW09961.1"/>
    <property type="molecule type" value="Genomic_DNA"/>
</dbReference>
<dbReference type="RefSeq" id="XP_001271387.1">
    <property type="nucleotide sequence ID" value="XM_001271386.1"/>
</dbReference>
<dbReference type="SMR" id="A1CLD7"/>
<dbReference type="STRING" id="344612.A1CLD7"/>
<dbReference type="EnsemblFungi" id="EAW09961">
    <property type="protein sequence ID" value="EAW09961"/>
    <property type="gene ID" value="ACLA_041830"/>
</dbReference>
<dbReference type="GeneID" id="4703123"/>
<dbReference type="KEGG" id="act:ACLA_041830"/>
<dbReference type="VEuPathDB" id="FungiDB:ACLA_041830"/>
<dbReference type="eggNOG" id="KOG0462">
    <property type="taxonomic scope" value="Eukaryota"/>
</dbReference>
<dbReference type="HOGENOM" id="CLU_009995_3_1_1"/>
<dbReference type="OMA" id="QVKCDEN"/>
<dbReference type="OrthoDB" id="1074at2759"/>
<dbReference type="Proteomes" id="UP000006701">
    <property type="component" value="Unassembled WGS sequence"/>
</dbReference>
<dbReference type="GO" id="GO:0005743">
    <property type="term" value="C:mitochondrial inner membrane"/>
    <property type="evidence" value="ECO:0007669"/>
    <property type="project" value="UniProtKB-SubCell"/>
</dbReference>
<dbReference type="GO" id="GO:0005759">
    <property type="term" value="C:mitochondrial matrix"/>
    <property type="evidence" value="ECO:0007669"/>
    <property type="project" value="UniProtKB-UniRule"/>
</dbReference>
<dbReference type="GO" id="GO:0005525">
    <property type="term" value="F:GTP binding"/>
    <property type="evidence" value="ECO:0007669"/>
    <property type="project" value="UniProtKB-UniRule"/>
</dbReference>
<dbReference type="GO" id="GO:0003924">
    <property type="term" value="F:GTPase activity"/>
    <property type="evidence" value="ECO:0007669"/>
    <property type="project" value="UniProtKB-UniRule"/>
</dbReference>
<dbReference type="GO" id="GO:0097177">
    <property type="term" value="F:mitochondrial ribosome binding"/>
    <property type="evidence" value="ECO:0007669"/>
    <property type="project" value="EnsemblFungi"/>
</dbReference>
<dbReference type="GO" id="GO:0045727">
    <property type="term" value="P:positive regulation of translation"/>
    <property type="evidence" value="ECO:0007669"/>
    <property type="project" value="UniProtKB-UniRule"/>
</dbReference>
<dbReference type="GO" id="GO:0006412">
    <property type="term" value="P:translation"/>
    <property type="evidence" value="ECO:0007669"/>
    <property type="project" value="UniProtKB-KW"/>
</dbReference>
<dbReference type="CDD" id="cd03699">
    <property type="entry name" value="EF4_II"/>
    <property type="match status" value="1"/>
</dbReference>
<dbReference type="CDD" id="cd16260">
    <property type="entry name" value="EF4_III"/>
    <property type="match status" value="1"/>
</dbReference>
<dbReference type="CDD" id="cd01890">
    <property type="entry name" value="LepA"/>
    <property type="match status" value="1"/>
</dbReference>
<dbReference type="CDD" id="cd03709">
    <property type="entry name" value="lepA_C"/>
    <property type="match status" value="1"/>
</dbReference>
<dbReference type="FunFam" id="3.40.50.300:FF:000078">
    <property type="entry name" value="Elongation factor 4"/>
    <property type="match status" value="1"/>
</dbReference>
<dbReference type="FunFam" id="2.40.30.10:FF:000015">
    <property type="entry name" value="Translation factor GUF1, mitochondrial"/>
    <property type="match status" value="1"/>
</dbReference>
<dbReference type="FunFam" id="3.30.70.240:FF:000007">
    <property type="entry name" value="Translation factor GUF1, mitochondrial"/>
    <property type="match status" value="1"/>
</dbReference>
<dbReference type="FunFam" id="3.30.70.2570:FF:000001">
    <property type="entry name" value="Translation factor GUF1, mitochondrial"/>
    <property type="match status" value="1"/>
</dbReference>
<dbReference type="FunFam" id="3.30.70.870:FF:000004">
    <property type="entry name" value="Translation factor GUF1, mitochondrial"/>
    <property type="match status" value="1"/>
</dbReference>
<dbReference type="Gene3D" id="3.30.70.240">
    <property type="match status" value="1"/>
</dbReference>
<dbReference type="Gene3D" id="3.30.70.2570">
    <property type="entry name" value="Elongation factor 4, C-terminal domain"/>
    <property type="match status" value="1"/>
</dbReference>
<dbReference type="Gene3D" id="3.30.70.870">
    <property type="entry name" value="Elongation Factor G (Translational Gtpase), domain 3"/>
    <property type="match status" value="1"/>
</dbReference>
<dbReference type="Gene3D" id="3.40.50.300">
    <property type="entry name" value="P-loop containing nucleotide triphosphate hydrolases"/>
    <property type="match status" value="1"/>
</dbReference>
<dbReference type="Gene3D" id="2.40.30.10">
    <property type="entry name" value="Translation factors"/>
    <property type="match status" value="1"/>
</dbReference>
<dbReference type="HAMAP" id="MF_00071">
    <property type="entry name" value="LepA"/>
    <property type="match status" value="1"/>
</dbReference>
<dbReference type="InterPro" id="IPR006297">
    <property type="entry name" value="EF-4"/>
</dbReference>
<dbReference type="InterPro" id="IPR035647">
    <property type="entry name" value="EFG_III/V"/>
</dbReference>
<dbReference type="InterPro" id="IPR000640">
    <property type="entry name" value="EFG_V-like"/>
</dbReference>
<dbReference type="InterPro" id="IPR031157">
    <property type="entry name" value="G_TR_CS"/>
</dbReference>
<dbReference type="InterPro" id="IPR038363">
    <property type="entry name" value="LepA_C_sf"/>
</dbReference>
<dbReference type="InterPro" id="IPR013842">
    <property type="entry name" value="LepA_CTD"/>
</dbReference>
<dbReference type="InterPro" id="IPR035654">
    <property type="entry name" value="LepA_IV"/>
</dbReference>
<dbReference type="InterPro" id="IPR027417">
    <property type="entry name" value="P-loop_NTPase"/>
</dbReference>
<dbReference type="InterPro" id="IPR005225">
    <property type="entry name" value="Small_GTP-bd"/>
</dbReference>
<dbReference type="InterPro" id="IPR000795">
    <property type="entry name" value="T_Tr_GTP-bd_dom"/>
</dbReference>
<dbReference type="InterPro" id="IPR009000">
    <property type="entry name" value="Transl_B-barrel_sf"/>
</dbReference>
<dbReference type="NCBIfam" id="TIGR01393">
    <property type="entry name" value="lepA"/>
    <property type="match status" value="1"/>
</dbReference>
<dbReference type="NCBIfam" id="TIGR00231">
    <property type="entry name" value="small_GTP"/>
    <property type="match status" value="1"/>
</dbReference>
<dbReference type="PANTHER" id="PTHR43512:SF7">
    <property type="entry name" value="TRANSLATION FACTOR GUF1, MITOCHONDRIAL"/>
    <property type="match status" value="1"/>
</dbReference>
<dbReference type="PANTHER" id="PTHR43512">
    <property type="entry name" value="TRANSLATION FACTOR GUF1-RELATED"/>
    <property type="match status" value="1"/>
</dbReference>
<dbReference type="Pfam" id="PF00679">
    <property type="entry name" value="EFG_C"/>
    <property type="match status" value="1"/>
</dbReference>
<dbReference type="Pfam" id="PF00009">
    <property type="entry name" value="GTP_EFTU"/>
    <property type="match status" value="1"/>
</dbReference>
<dbReference type="Pfam" id="PF06421">
    <property type="entry name" value="LepA_C"/>
    <property type="match status" value="1"/>
</dbReference>
<dbReference type="PRINTS" id="PR00315">
    <property type="entry name" value="ELONGATNFCT"/>
</dbReference>
<dbReference type="SUPFAM" id="SSF54980">
    <property type="entry name" value="EF-G C-terminal domain-like"/>
    <property type="match status" value="2"/>
</dbReference>
<dbReference type="SUPFAM" id="SSF52540">
    <property type="entry name" value="P-loop containing nucleoside triphosphate hydrolases"/>
    <property type="match status" value="1"/>
</dbReference>
<dbReference type="SUPFAM" id="SSF50447">
    <property type="entry name" value="Translation proteins"/>
    <property type="match status" value="1"/>
</dbReference>
<dbReference type="PROSITE" id="PS00301">
    <property type="entry name" value="G_TR_1"/>
    <property type="match status" value="1"/>
</dbReference>
<dbReference type="PROSITE" id="PS51722">
    <property type="entry name" value="G_TR_2"/>
    <property type="match status" value="1"/>
</dbReference>
<reference key="1">
    <citation type="journal article" date="2008" name="PLoS Genet.">
        <title>Genomic islands in the pathogenic filamentous fungus Aspergillus fumigatus.</title>
        <authorList>
            <person name="Fedorova N.D."/>
            <person name="Khaldi N."/>
            <person name="Joardar V.S."/>
            <person name="Maiti R."/>
            <person name="Amedeo P."/>
            <person name="Anderson M.J."/>
            <person name="Crabtree J."/>
            <person name="Silva J.C."/>
            <person name="Badger J.H."/>
            <person name="Albarraq A."/>
            <person name="Angiuoli S."/>
            <person name="Bussey H."/>
            <person name="Bowyer P."/>
            <person name="Cotty P.J."/>
            <person name="Dyer P.S."/>
            <person name="Egan A."/>
            <person name="Galens K."/>
            <person name="Fraser-Liggett C.M."/>
            <person name="Haas B.J."/>
            <person name="Inman J.M."/>
            <person name="Kent R."/>
            <person name="Lemieux S."/>
            <person name="Malavazi I."/>
            <person name="Orvis J."/>
            <person name="Roemer T."/>
            <person name="Ronning C.M."/>
            <person name="Sundaram J.P."/>
            <person name="Sutton G."/>
            <person name="Turner G."/>
            <person name="Venter J.C."/>
            <person name="White O.R."/>
            <person name="Whitty B.R."/>
            <person name="Youngman P."/>
            <person name="Wolfe K.H."/>
            <person name="Goldman G.H."/>
            <person name="Wortman J.R."/>
            <person name="Jiang B."/>
            <person name="Denning D.W."/>
            <person name="Nierman W.C."/>
        </authorList>
    </citation>
    <scope>NUCLEOTIDE SEQUENCE [LARGE SCALE GENOMIC DNA]</scope>
    <source>
        <strain>ATCC 1007 / CBS 513.65 / DSM 816 / NCTC 3887 / NRRL 1 / QM 1276 / 107</strain>
    </source>
</reference>
<proteinExistence type="inferred from homology"/>
<gene>
    <name type="primary">guf1</name>
    <name type="ORF">ACLA_041830</name>
</gene>
<evidence type="ECO:0000255" key="1">
    <source>
        <dbReference type="HAMAP-Rule" id="MF_03137"/>
    </source>
</evidence>
<evidence type="ECO:0000305" key="2"/>
<organism>
    <name type="scientific">Aspergillus clavatus (strain ATCC 1007 / CBS 513.65 / DSM 816 / NCTC 3887 / NRRL 1 / QM 1276 / 107)</name>
    <dbReference type="NCBI Taxonomy" id="344612"/>
    <lineage>
        <taxon>Eukaryota</taxon>
        <taxon>Fungi</taxon>
        <taxon>Dikarya</taxon>
        <taxon>Ascomycota</taxon>
        <taxon>Pezizomycotina</taxon>
        <taxon>Eurotiomycetes</taxon>
        <taxon>Eurotiomycetidae</taxon>
        <taxon>Eurotiales</taxon>
        <taxon>Aspergillaceae</taxon>
        <taxon>Aspergillus</taxon>
        <taxon>Aspergillus subgen. Fumigati</taxon>
    </lineage>
</organism>
<accession>A1CLD7</accession>
<name>GUF1_ASPCL</name>
<protein>
    <recommendedName>
        <fullName evidence="1">Translation factor guf1, mitochondrial</fullName>
        <ecNumber>3.6.5.-</ecNumber>
    </recommendedName>
    <alternativeName>
        <fullName evidence="1">Elongation factor 4 homolog</fullName>
        <shortName evidence="1">EF-4</shortName>
    </alternativeName>
    <alternativeName>
        <fullName evidence="1">GTPase guf1</fullName>
    </alternativeName>
    <alternativeName>
        <fullName evidence="1">Ribosomal back-translocase</fullName>
    </alternativeName>
</protein>
<sequence length="664" mass="73811">MRGCLQLARWLSAAPKGTAASLTRAPFGLANATRFFTNSAARAGSRATASKPVTDLENRISAIPIERYRNFCIVAHVDHGKSTLSDRLLELTGTIQPGSNKQVLDKLDVERERGITVKAQTCTMIYNHNGEDYLLHLVDTPGHVDFRAEVSRSYASCGGALLLVDASQGVQAQTVANFYLAFAQGLELIPVINKVDLPSAEPQRALDQMKHTFELDTENAVMVSAKTGLNVEQLLPTVVDKIPAPIGDCKKPLRMLLVDSWYDSYKGVICLVRIFDGELRAGQQVVSFATGLKYYVGEVGIMYPNETAQSVIRAGQVGYIYFNPGMKRSQEAKIGDTFTKVGSEKAVQPLPGFEEPKAMVFVAAYPVDADHFEHLEDSINQLVLNDRSITVQKESSEALGAGFRLGFLGTLHCSVFEDRLRQEHGASIIITPPSVPVKVIWTDGKEEIITSPVRFPDDEEVRNKIAEIQEPYVLATLTFPEEYLGKVIELCEANRGEQKTLEYFTATQVILKYELPLAQLVDDFFGKLKGSTKGYASLDYEESAWQPGHIVKLQLLVNKAPVDAVARIMHSSQVDRLARQWVTKFKQHVDRQLFEVVIQAAVGRKVIARETVKPYRKDVLAKLHASDVSRRRKLLEKQKEGRKRLRAVGNVVIEHKAFQAFLAK</sequence>
<comment type="function">
    <text evidence="1">Promotes mitochondrial protein synthesis. May act as a fidelity factor of the translation reaction, by catalyzing a one-codon backward translocation of tRNAs on improperly translocated ribosomes. Binds to mitochondrial ribosomes in a GTP-dependent manner.</text>
</comment>
<comment type="catalytic activity">
    <reaction evidence="1">
        <text>GTP + H2O = GDP + phosphate + H(+)</text>
        <dbReference type="Rhea" id="RHEA:19669"/>
        <dbReference type="ChEBI" id="CHEBI:15377"/>
        <dbReference type="ChEBI" id="CHEBI:15378"/>
        <dbReference type="ChEBI" id="CHEBI:37565"/>
        <dbReference type="ChEBI" id="CHEBI:43474"/>
        <dbReference type="ChEBI" id="CHEBI:58189"/>
    </reaction>
</comment>
<comment type="subcellular location">
    <subcellularLocation>
        <location evidence="1">Mitochondrion inner membrane</location>
        <topology evidence="1">Peripheral membrane protein</topology>
        <orientation evidence="1">Matrix side</orientation>
    </subcellularLocation>
</comment>
<comment type="similarity">
    <text evidence="2">Belongs to the TRAFAC class translation factor GTPase superfamily. Classic translation factor GTPase family. LepA subfamily.</text>
</comment>